<feature type="chain" id="PRO_0000128204" description="Pantothenate synthetase">
    <location>
        <begin position="1"/>
        <end position="286"/>
    </location>
</feature>
<feature type="active site" description="Proton donor" evidence="1">
    <location>
        <position position="37"/>
    </location>
</feature>
<feature type="binding site" evidence="1">
    <location>
        <begin position="30"/>
        <end position="37"/>
    </location>
    <ligand>
        <name>ATP</name>
        <dbReference type="ChEBI" id="CHEBI:30616"/>
    </ligand>
</feature>
<feature type="binding site" evidence="1">
    <location>
        <position position="61"/>
    </location>
    <ligand>
        <name>(R)-pantoate</name>
        <dbReference type="ChEBI" id="CHEBI:15980"/>
    </ligand>
</feature>
<feature type="binding site" evidence="1">
    <location>
        <position position="61"/>
    </location>
    <ligand>
        <name>beta-alanine</name>
        <dbReference type="ChEBI" id="CHEBI:57966"/>
    </ligand>
</feature>
<feature type="binding site" evidence="1">
    <location>
        <begin position="147"/>
        <end position="150"/>
    </location>
    <ligand>
        <name>ATP</name>
        <dbReference type="ChEBI" id="CHEBI:30616"/>
    </ligand>
</feature>
<feature type="binding site" evidence="1">
    <location>
        <position position="153"/>
    </location>
    <ligand>
        <name>(R)-pantoate</name>
        <dbReference type="ChEBI" id="CHEBI:15980"/>
    </ligand>
</feature>
<feature type="binding site" evidence="1">
    <location>
        <position position="176"/>
    </location>
    <ligand>
        <name>ATP</name>
        <dbReference type="ChEBI" id="CHEBI:30616"/>
    </ligand>
</feature>
<feature type="binding site" evidence="1">
    <location>
        <begin position="184"/>
        <end position="187"/>
    </location>
    <ligand>
        <name>ATP</name>
        <dbReference type="ChEBI" id="CHEBI:30616"/>
    </ligand>
</feature>
<sequence>MRQITDISQLKEAIKQYHSEGKSIGFVPTMGFLHEGHLTLADKARQENDAVIMSIFVNPAQFGPNEDFEAYPRDIERDAALAENAGVDILFTPDAHDMYPGEKNVTIHVERRTDVLCGRSREGHFDGVAIVLTKLFNLVKPTRAYFGLKDAQQVAVVDGLISDFFMDIELVPVDTVREEDGLAKSSRNVYLTAEERKEAPKLYRALQTSAELVQAGERDPEAVIKAAKDIIETTSGTIDYVELYSYPELEPVNEIAGKMILAVAVAFSKARLIDNIIIDIREMERI</sequence>
<accession>P52998</accession>
<keyword id="KW-0067">ATP-binding</keyword>
<keyword id="KW-0963">Cytoplasm</keyword>
<keyword id="KW-0436">Ligase</keyword>
<keyword id="KW-0547">Nucleotide-binding</keyword>
<keyword id="KW-0566">Pantothenate biosynthesis</keyword>
<keyword id="KW-1185">Reference proteome</keyword>
<reference key="1">
    <citation type="journal article" date="1996" name="Microbiology">
        <title>Sequence analysis of the Bacillus subtilis chromosome region between the serA and kdg loci cloned in a yeast artificial chromosome.</title>
        <authorList>
            <person name="Sorokin A.V."/>
            <person name="Azevedo V."/>
            <person name="Zumstein E."/>
            <person name="Galleron N."/>
            <person name="Ehrlich S.D."/>
            <person name="Serror P."/>
        </authorList>
    </citation>
    <scope>NUCLEOTIDE SEQUENCE [GENOMIC DNA]</scope>
    <source>
        <strain>168 / Marburg / ATCC 6051 / DSM 10 / JCM 1465 / NBRC 13719 / NCIMB 3610 / NRRL NRS-744 / VKM B-501</strain>
    </source>
</reference>
<reference key="2">
    <citation type="journal article" date="1997" name="Nature">
        <title>The complete genome sequence of the Gram-positive bacterium Bacillus subtilis.</title>
        <authorList>
            <person name="Kunst F."/>
            <person name="Ogasawara N."/>
            <person name="Moszer I."/>
            <person name="Albertini A.M."/>
            <person name="Alloni G."/>
            <person name="Azevedo V."/>
            <person name="Bertero M.G."/>
            <person name="Bessieres P."/>
            <person name="Bolotin A."/>
            <person name="Borchert S."/>
            <person name="Borriss R."/>
            <person name="Boursier L."/>
            <person name="Brans A."/>
            <person name="Braun M."/>
            <person name="Brignell S.C."/>
            <person name="Bron S."/>
            <person name="Brouillet S."/>
            <person name="Bruschi C.V."/>
            <person name="Caldwell B."/>
            <person name="Capuano V."/>
            <person name="Carter N.M."/>
            <person name="Choi S.-K."/>
            <person name="Codani J.-J."/>
            <person name="Connerton I.F."/>
            <person name="Cummings N.J."/>
            <person name="Daniel R.A."/>
            <person name="Denizot F."/>
            <person name="Devine K.M."/>
            <person name="Duesterhoeft A."/>
            <person name="Ehrlich S.D."/>
            <person name="Emmerson P.T."/>
            <person name="Entian K.-D."/>
            <person name="Errington J."/>
            <person name="Fabret C."/>
            <person name="Ferrari E."/>
            <person name="Foulger D."/>
            <person name="Fritz C."/>
            <person name="Fujita M."/>
            <person name="Fujita Y."/>
            <person name="Fuma S."/>
            <person name="Galizzi A."/>
            <person name="Galleron N."/>
            <person name="Ghim S.-Y."/>
            <person name="Glaser P."/>
            <person name="Goffeau A."/>
            <person name="Golightly E.J."/>
            <person name="Grandi G."/>
            <person name="Guiseppi G."/>
            <person name="Guy B.J."/>
            <person name="Haga K."/>
            <person name="Haiech J."/>
            <person name="Harwood C.R."/>
            <person name="Henaut A."/>
            <person name="Hilbert H."/>
            <person name="Holsappel S."/>
            <person name="Hosono S."/>
            <person name="Hullo M.-F."/>
            <person name="Itaya M."/>
            <person name="Jones L.-M."/>
            <person name="Joris B."/>
            <person name="Karamata D."/>
            <person name="Kasahara Y."/>
            <person name="Klaerr-Blanchard M."/>
            <person name="Klein C."/>
            <person name="Kobayashi Y."/>
            <person name="Koetter P."/>
            <person name="Koningstein G."/>
            <person name="Krogh S."/>
            <person name="Kumano M."/>
            <person name="Kurita K."/>
            <person name="Lapidus A."/>
            <person name="Lardinois S."/>
            <person name="Lauber J."/>
            <person name="Lazarevic V."/>
            <person name="Lee S.-M."/>
            <person name="Levine A."/>
            <person name="Liu H."/>
            <person name="Masuda S."/>
            <person name="Mauel C."/>
            <person name="Medigue C."/>
            <person name="Medina N."/>
            <person name="Mellado R.P."/>
            <person name="Mizuno M."/>
            <person name="Moestl D."/>
            <person name="Nakai S."/>
            <person name="Noback M."/>
            <person name="Noone D."/>
            <person name="O'Reilly M."/>
            <person name="Ogawa K."/>
            <person name="Ogiwara A."/>
            <person name="Oudega B."/>
            <person name="Park S.-H."/>
            <person name="Parro V."/>
            <person name="Pohl T.M."/>
            <person name="Portetelle D."/>
            <person name="Porwollik S."/>
            <person name="Prescott A.M."/>
            <person name="Presecan E."/>
            <person name="Pujic P."/>
            <person name="Purnelle B."/>
            <person name="Rapoport G."/>
            <person name="Rey M."/>
            <person name="Reynolds S."/>
            <person name="Rieger M."/>
            <person name="Rivolta C."/>
            <person name="Rocha E."/>
            <person name="Roche B."/>
            <person name="Rose M."/>
            <person name="Sadaie Y."/>
            <person name="Sato T."/>
            <person name="Scanlan E."/>
            <person name="Schleich S."/>
            <person name="Schroeter R."/>
            <person name="Scoffone F."/>
            <person name="Sekiguchi J."/>
            <person name="Sekowska A."/>
            <person name="Seror S.J."/>
            <person name="Serror P."/>
            <person name="Shin B.-S."/>
            <person name="Soldo B."/>
            <person name="Sorokin A."/>
            <person name="Tacconi E."/>
            <person name="Takagi T."/>
            <person name="Takahashi H."/>
            <person name="Takemaru K."/>
            <person name="Takeuchi M."/>
            <person name="Tamakoshi A."/>
            <person name="Tanaka T."/>
            <person name="Terpstra P."/>
            <person name="Tognoni A."/>
            <person name="Tosato V."/>
            <person name="Uchiyama S."/>
            <person name="Vandenbol M."/>
            <person name="Vannier F."/>
            <person name="Vassarotti A."/>
            <person name="Viari A."/>
            <person name="Wambutt R."/>
            <person name="Wedler E."/>
            <person name="Wedler H."/>
            <person name="Weitzenegger T."/>
            <person name="Winters P."/>
            <person name="Wipat A."/>
            <person name="Yamamoto H."/>
            <person name="Yamane K."/>
            <person name="Yasumoto K."/>
            <person name="Yata K."/>
            <person name="Yoshida K."/>
            <person name="Yoshikawa H.-F."/>
            <person name="Zumstein E."/>
            <person name="Yoshikawa H."/>
            <person name="Danchin A."/>
        </authorList>
    </citation>
    <scope>NUCLEOTIDE SEQUENCE [LARGE SCALE GENOMIC DNA]</scope>
    <source>
        <strain>168</strain>
    </source>
</reference>
<evidence type="ECO:0000255" key="1">
    <source>
        <dbReference type="HAMAP-Rule" id="MF_00158"/>
    </source>
</evidence>
<name>PANC_BACSU</name>
<comment type="function">
    <text evidence="1">Catalyzes the condensation of pantoate with beta-alanine in an ATP-dependent reaction via a pantoyl-adenylate intermediate.</text>
</comment>
<comment type="catalytic activity">
    <reaction evidence="1">
        <text>(R)-pantoate + beta-alanine + ATP = (R)-pantothenate + AMP + diphosphate + H(+)</text>
        <dbReference type="Rhea" id="RHEA:10912"/>
        <dbReference type="ChEBI" id="CHEBI:15378"/>
        <dbReference type="ChEBI" id="CHEBI:15980"/>
        <dbReference type="ChEBI" id="CHEBI:29032"/>
        <dbReference type="ChEBI" id="CHEBI:30616"/>
        <dbReference type="ChEBI" id="CHEBI:33019"/>
        <dbReference type="ChEBI" id="CHEBI:57966"/>
        <dbReference type="ChEBI" id="CHEBI:456215"/>
        <dbReference type="EC" id="6.3.2.1"/>
    </reaction>
</comment>
<comment type="pathway">
    <text evidence="1">Cofactor biosynthesis; (R)-pantothenate biosynthesis; (R)-pantothenate from (R)-pantoate and beta-alanine: step 1/1.</text>
</comment>
<comment type="subunit">
    <text evidence="1">Homodimer.</text>
</comment>
<comment type="subcellular location">
    <subcellularLocation>
        <location evidence="1">Cytoplasm</location>
    </subcellularLocation>
</comment>
<comment type="miscellaneous">
    <text evidence="1">The reaction proceeds by a bi uni uni bi ping pong mechanism.</text>
</comment>
<comment type="similarity">
    <text evidence="1">Belongs to the pantothenate synthetase family.</text>
</comment>
<proteinExistence type="inferred from homology"/>
<protein>
    <recommendedName>
        <fullName evidence="1">Pantothenate synthetase</fullName>
        <shortName evidence="1">PS</shortName>
        <ecNumber evidence="1">6.3.2.1</ecNumber>
    </recommendedName>
    <alternativeName>
        <fullName evidence="1">Pantoate--beta-alanine ligase</fullName>
    </alternativeName>
    <alternativeName>
        <fullName evidence="1">Pantoate-activating enzyme</fullName>
    </alternativeName>
</protein>
<gene>
    <name evidence="1" type="primary">panC</name>
    <name type="ordered locus">BSU22420</name>
</gene>
<dbReference type="EC" id="6.3.2.1" evidence="1"/>
<dbReference type="EMBL" id="L47709">
    <property type="protein sequence ID" value="AAB38449.1"/>
    <property type="molecule type" value="Genomic_DNA"/>
</dbReference>
<dbReference type="EMBL" id="AL009126">
    <property type="protein sequence ID" value="CAB14158.1"/>
    <property type="molecule type" value="Genomic_DNA"/>
</dbReference>
<dbReference type="PIR" id="H69671">
    <property type="entry name" value="H69671"/>
</dbReference>
<dbReference type="RefSeq" id="NP_390123.1">
    <property type="nucleotide sequence ID" value="NC_000964.3"/>
</dbReference>
<dbReference type="RefSeq" id="WP_003230656.1">
    <property type="nucleotide sequence ID" value="NZ_OZ025638.1"/>
</dbReference>
<dbReference type="SMR" id="P52998"/>
<dbReference type="FunCoup" id="P52998">
    <property type="interactions" value="716"/>
</dbReference>
<dbReference type="STRING" id="224308.BSU22420"/>
<dbReference type="jPOST" id="P52998"/>
<dbReference type="PaxDb" id="224308-BSU22420"/>
<dbReference type="EnsemblBacteria" id="CAB14158">
    <property type="protein sequence ID" value="CAB14158"/>
    <property type="gene ID" value="BSU_22420"/>
</dbReference>
<dbReference type="GeneID" id="939030"/>
<dbReference type="KEGG" id="bsu:BSU22420"/>
<dbReference type="PATRIC" id="fig|224308.179.peg.2446"/>
<dbReference type="eggNOG" id="COG0414">
    <property type="taxonomic scope" value="Bacteria"/>
</dbReference>
<dbReference type="InParanoid" id="P52998"/>
<dbReference type="OrthoDB" id="9773087at2"/>
<dbReference type="PhylomeDB" id="P52998"/>
<dbReference type="BioCyc" id="BSUB:BSU22420-MONOMER"/>
<dbReference type="UniPathway" id="UPA00028">
    <property type="reaction ID" value="UER00005"/>
</dbReference>
<dbReference type="Proteomes" id="UP000001570">
    <property type="component" value="Chromosome"/>
</dbReference>
<dbReference type="GO" id="GO:0005829">
    <property type="term" value="C:cytosol"/>
    <property type="evidence" value="ECO:0000318"/>
    <property type="project" value="GO_Central"/>
</dbReference>
<dbReference type="GO" id="GO:0005524">
    <property type="term" value="F:ATP binding"/>
    <property type="evidence" value="ECO:0007669"/>
    <property type="project" value="UniProtKB-KW"/>
</dbReference>
<dbReference type="GO" id="GO:0004592">
    <property type="term" value="F:pantoate-beta-alanine ligase activity"/>
    <property type="evidence" value="ECO:0000318"/>
    <property type="project" value="GO_Central"/>
</dbReference>
<dbReference type="GO" id="GO:0015940">
    <property type="term" value="P:pantothenate biosynthetic process"/>
    <property type="evidence" value="ECO:0000318"/>
    <property type="project" value="GO_Central"/>
</dbReference>
<dbReference type="CDD" id="cd00560">
    <property type="entry name" value="PanC"/>
    <property type="match status" value="1"/>
</dbReference>
<dbReference type="FunFam" id="3.30.1300.10:FF:000001">
    <property type="entry name" value="Pantothenate synthetase"/>
    <property type="match status" value="1"/>
</dbReference>
<dbReference type="FunFam" id="3.40.50.620:FF:000013">
    <property type="entry name" value="Pantothenate synthetase"/>
    <property type="match status" value="1"/>
</dbReference>
<dbReference type="Gene3D" id="3.40.50.620">
    <property type="entry name" value="HUPs"/>
    <property type="match status" value="1"/>
</dbReference>
<dbReference type="Gene3D" id="3.30.1300.10">
    <property type="entry name" value="Pantoate-beta-alanine ligase, C-terminal domain"/>
    <property type="match status" value="1"/>
</dbReference>
<dbReference type="HAMAP" id="MF_00158">
    <property type="entry name" value="PanC"/>
    <property type="match status" value="1"/>
</dbReference>
<dbReference type="InterPro" id="IPR004821">
    <property type="entry name" value="Cyt_trans-like"/>
</dbReference>
<dbReference type="InterPro" id="IPR003721">
    <property type="entry name" value="Pantoate_ligase"/>
</dbReference>
<dbReference type="InterPro" id="IPR042176">
    <property type="entry name" value="Pantoate_ligase_C"/>
</dbReference>
<dbReference type="InterPro" id="IPR014729">
    <property type="entry name" value="Rossmann-like_a/b/a_fold"/>
</dbReference>
<dbReference type="NCBIfam" id="TIGR00125">
    <property type="entry name" value="cyt_tran_rel"/>
    <property type="match status" value="1"/>
</dbReference>
<dbReference type="NCBIfam" id="TIGR00018">
    <property type="entry name" value="panC"/>
    <property type="match status" value="1"/>
</dbReference>
<dbReference type="PANTHER" id="PTHR21299">
    <property type="entry name" value="CYTIDYLATE KINASE/PANTOATE-BETA-ALANINE LIGASE"/>
    <property type="match status" value="1"/>
</dbReference>
<dbReference type="PANTHER" id="PTHR21299:SF1">
    <property type="entry name" value="PANTOATE--BETA-ALANINE LIGASE"/>
    <property type="match status" value="1"/>
</dbReference>
<dbReference type="Pfam" id="PF02569">
    <property type="entry name" value="Pantoate_ligase"/>
    <property type="match status" value="1"/>
</dbReference>
<dbReference type="SUPFAM" id="SSF52374">
    <property type="entry name" value="Nucleotidylyl transferase"/>
    <property type="match status" value="1"/>
</dbReference>
<organism>
    <name type="scientific">Bacillus subtilis (strain 168)</name>
    <dbReference type="NCBI Taxonomy" id="224308"/>
    <lineage>
        <taxon>Bacteria</taxon>
        <taxon>Bacillati</taxon>
        <taxon>Bacillota</taxon>
        <taxon>Bacilli</taxon>
        <taxon>Bacillales</taxon>
        <taxon>Bacillaceae</taxon>
        <taxon>Bacillus</taxon>
    </lineage>
</organism>